<evidence type="ECO:0000250" key="1"/>
<evidence type="ECO:0000255" key="2"/>
<evidence type="ECO:0000255" key="3">
    <source>
        <dbReference type="PROSITE-ProRule" id="PRU01266"/>
    </source>
</evidence>
<evidence type="ECO:0000305" key="4"/>
<feature type="chain" id="PRO_0000350106" description="Probable RNA methyltransferase CV_2253">
    <location>
        <begin position="1"/>
        <end position="352"/>
    </location>
</feature>
<feature type="domain" description="Radical SAM core" evidence="3">
    <location>
        <begin position="94"/>
        <end position="320"/>
    </location>
</feature>
<feature type="active site" description="Proton acceptor" evidence="2">
    <location>
        <position position="91"/>
    </location>
</feature>
<feature type="active site" description="S-methylcysteine intermediate" evidence="1">
    <location>
        <position position="325"/>
    </location>
</feature>
<feature type="binding site" evidence="1">
    <location>
        <position position="108"/>
    </location>
    <ligand>
        <name>[4Fe-4S] cluster</name>
        <dbReference type="ChEBI" id="CHEBI:49883"/>
        <note>4Fe-4S-S-AdoMet</note>
    </ligand>
</feature>
<feature type="binding site" evidence="1">
    <location>
        <position position="112"/>
    </location>
    <ligand>
        <name>[4Fe-4S] cluster</name>
        <dbReference type="ChEBI" id="CHEBI:49883"/>
        <note>4Fe-4S-S-AdoMet</note>
    </ligand>
</feature>
<feature type="binding site" evidence="1">
    <location>
        <position position="115"/>
    </location>
    <ligand>
        <name>[4Fe-4S] cluster</name>
        <dbReference type="ChEBI" id="CHEBI:49883"/>
        <note>4Fe-4S-S-AdoMet</note>
    </ligand>
</feature>
<feature type="binding site" evidence="1">
    <location>
        <begin position="153"/>
        <end position="154"/>
    </location>
    <ligand>
        <name>S-adenosyl-L-methionine</name>
        <dbReference type="ChEBI" id="CHEBI:59789"/>
    </ligand>
</feature>
<feature type="binding site" evidence="1">
    <location>
        <position position="183"/>
    </location>
    <ligand>
        <name>S-adenosyl-L-methionine</name>
        <dbReference type="ChEBI" id="CHEBI:59789"/>
    </ligand>
</feature>
<feature type="binding site" evidence="1">
    <location>
        <begin position="206"/>
        <end position="208"/>
    </location>
    <ligand>
        <name>S-adenosyl-L-methionine</name>
        <dbReference type="ChEBI" id="CHEBI:59789"/>
    </ligand>
</feature>
<feature type="binding site" evidence="1">
    <location>
        <position position="282"/>
    </location>
    <ligand>
        <name>S-adenosyl-L-methionine</name>
        <dbReference type="ChEBI" id="CHEBI:59789"/>
    </ligand>
</feature>
<feature type="disulfide bond" description="(transient)" evidence="1">
    <location>
        <begin position="101"/>
        <end position="325"/>
    </location>
</feature>
<accession>Q7NVT9</accession>
<gene>
    <name type="ordered locus">CV_2253</name>
</gene>
<proteinExistence type="inferred from homology"/>
<dbReference type="EC" id="2.1.1.-"/>
<dbReference type="EMBL" id="AE016825">
    <property type="protein sequence ID" value="AAQ59925.1"/>
    <property type="molecule type" value="Genomic_DNA"/>
</dbReference>
<dbReference type="RefSeq" id="WP_011135800.1">
    <property type="nucleotide sequence ID" value="NC_005085.1"/>
</dbReference>
<dbReference type="SMR" id="Q7NVT9"/>
<dbReference type="STRING" id="243365.CV_2253"/>
<dbReference type="KEGG" id="cvi:CV_2253"/>
<dbReference type="eggNOG" id="COG0820">
    <property type="taxonomic scope" value="Bacteria"/>
</dbReference>
<dbReference type="HOGENOM" id="CLU_029101_3_3_4"/>
<dbReference type="OrthoDB" id="9793973at2"/>
<dbReference type="Proteomes" id="UP000001424">
    <property type="component" value="Chromosome"/>
</dbReference>
<dbReference type="GO" id="GO:0005737">
    <property type="term" value="C:cytoplasm"/>
    <property type="evidence" value="ECO:0007669"/>
    <property type="project" value="UniProtKB-SubCell"/>
</dbReference>
<dbReference type="GO" id="GO:0051539">
    <property type="term" value="F:4 iron, 4 sulfur cluster binding"/>
    <property type="evidence" value="ECO:0007669"/>
    <property type="project" value="UniProtKB-KW"/>
</dbReference>
<dbReference type="GO" id="GO:0046872">
    <property type="term" value="F:metal ion binding"/>
    <property type="evidence" value="ECO:0007669"/>
    <property type="project" value="UniProtKB-KW"/>
</dbReference>
<dbReference type="GO" id="GO:0008173">
    <property type="term" value="F:RNA methyltransferase activity"/>
    <property type="evidence" value="ECO:0007669"/>
    <property type="project" value="InterPro"/>
</dbReference>
<dbReference type="GO" id="GO:0070475">
    <property type="term" value="P:rRNA base methylation"/>
    <property type="evidence" value="ECO:0007669"/>
    <property type="project" value="TreeGrafter"/>
</dbReference>
<dbReference type="GO" id="GO:0030488">
    <property type="term" value="P:tRNA methylation"/>
    <property type="evidence" value="ECO:0007669"/>
    <property type="project" value="TreeGrafter"/>
</dbReference>
<dbReference type="Gene3D" id="3.20.20.70">
    <property type="entry name" value="Aldolase class I"/>
    <property type="match status" value="1"/>
</dbReference>
<dbReference type="InterPro" id="IPR013785">
    <property type="entry name" value="Aldolase_TIM"/>
</dbReference>
<dbReference type="InterPro" id="IPR040072">
    <property type="entry name" value="Methyltransferase_A"/>
</dbReference>
<dbReference type="InterPro" id="IPR004383">
    <property type="entry name" value="rRNA_lsu_MTrfase_RlmN/Cfr"/>
</dbReference>
<dbReference type="InterPro" id="IPR007197">
    <property type="entry name" value="rSAM"/>
</dbReference>
<dbReference type="NCBIfam" id="NF011034">
    <property type="entry name" value="PRK14464.1"/>
    <property type="match status" value="1"/>
</dbReference>
<dbReference type="PANTHER" id="PTHR30544">
    <property type="entry name" value="23S RRNA METHYLTRANSFERASE"/>
    <property type="match status" value="1"/>
</dbReference>
<dbReference type="PANTHER" id="PTHR30544:SF5">
    <property type="entry name" value="RADICAL SAM CORE DOMAIN-CONTAINING PROTEIN"/>
    <property type="match status" value="1"/>
</dbReference>
<dbReference type="Pfam" id="PF04055">
    <property type="entry name" value="Radical_SAM"/>
    <property type="match status" value="1"/>
</dbReference>
<dbReference type="PIRSF" id="PIRSF006004">
    <property type="entry name" value="CHP00048"/>
    <property type="match status" value="1"/>
</dbReference>
<dbReference type="SFLD" id="SFLDF00275">
    <property type="entry name" value="adenosine_C2_methyltransferase"/>
    <property type="match status" value="1"/>
</dbReference>
<dbReference type="SFLD" id="SFLDG01062">
    <property type="entry name" value="methyltransferase_(Class_A)"/>
    <property type="match status" value="1"/>
</dbReference>
<dbReference type="SUPFAM" id="SSF102114">
    <property type="entry name" value="Radical SAM enzymes"/>
    <property type="match status" value="1"/>
</dbReference>
<dbReference type="PROSITE" id="PS51918">
    <property type="entry name" value="RADICAL_SAM"/>
    <property type="match status" value="1"/>
</dbReference>
<name>Y2253_CHRVO</name>
<sequence length="352" mass="38518">MHIQEFHQALADIGARPCHIGRINRAWLKGLPLDAGTRHQKSEDYFPLSVREGLAPIAARIEKLARIHSRHDADDGSLRLLVGLGDGQMVESVLLPRDGLCVSSQVGCAVGCTFCMTGKSGLLRQLGSAEIAAQVALARRIRPVKKVVFMGMGEPAHNMENVLEAIQWLGTDGNIGHKNLVFSTVGDARVFERLPQLEVKPALALSLHTTRADLREQLLPRAPRIAPAELVELGEAYARRVGYPIQYQWTLLAGVNDSQEEMDAAARLLKGKYGVLNIIPYNSVEGDRFQRPSSERVQAIKRYLHDNGVLTKVRDSAGQDVDGGCGQLRARAAHVIDASRLRRREQAGVSAG</sequence>
<protein>
    <recommendedName>
        <fullName>Probable RNA methyltransferase CV_2253</fullName>
        <ecNumber>2.1.1.-</ecNumber>
    </recommendedName>
</protein>
<reference key="1">
    <citation type="journal article" date="2003" name="Proc. Natl. Acad. Sci. U.S.A.">
        <title>The complete genome sequence of Chromobacterium violaceum reveals remarkable and exploitable bacterial adaptability.</title>
        <authorList>
            <person name="Vasconcelos A.T.R."/>
            <person name="de Almeida D.F."/>
            <person name="Hungria M."/>
            <person name="Guimaraes C.T."/>
            <person name="Antonio R.V."/>
            <person name="Almeida F.C."/>
            <person name="de Almeida L.G.P."/>
            <person name="de Almeida R."/>
            <person name="Alves-Gomes J.A."/>
            <person name="Andrade E.M."/>
            <person name="Araripe J."/>
            <person name="de Araujo M.F.F."/>
            <person name="Astolfi-Filho S."/>
            <person name="Azevedo V."/>
            <person name="Baptista A.J."/>
            <person name="Bataus L.A.M."/>
            <person name="Batista J.S."/>
            <person name="Belo A."/>
            <person name="van den Berg C."/>
            <person name="Bogo M."/>
            <person name="Bonatto S."/>
            <person name="Bordignon J."/>
            <person name="Brigido M.M."/>
            <person name="Brito C.A."/>
            <person name="Brocchi M."/>
            <person name="Burity H.A."/>
            <person name="Camargo A.A."/>
            <person name="Cardoso D.D.P."/>
            <person name="Carneiro N.P."/>
            <person name="Carraro D.M."/>
            <person name="Carvalho C.M.B."/>
            <person name="Cascardo J.C.M."/>
            <person name="Cavada B.S."/>
            <person name="Chueire L.M.O."/>
            <person name="Creczynski-Pasa T.B."/>
            <person name="Cunha-Junior N.C."/>
            <person name="Fagundes N."/>
            <person name="Falcao C.L."/>
            <person name="Fantinatti F."/>
            <person name="Farias I.P."/>
            <person name="Felipe M.S.S."/>
            <person name="Ferrari L.P."/>
            <person name="Ferro J.A."/>
            <person name="Ferro M.I.T."/>
            <person name="Franco G.R."/>
            <person name="Freitas N.S.A."/>
            <person name="Furlan L.R."/>
            <person name="Gazzinelli R.T."/>
            <person name="Gomes E.A."/>
            <person name="Goncalves P.R."/>
            <person name="Grangeiro T.B."/>
            <person name="Grattapaglia D."/>
            <person name="Grisard E.C."/>
            <person name="Hanna E.S."/>
            <person name="Jardim S.N."/>
            <person name="Laurino J."/>
            <person name="Leoi L.C.T."/>
            <person name="Lima L.F.A."/>
            <person name="Loureiro M.F."/>
            <person name="Lyra M.C.C.P."/>
            <person name="Madeira H.M.F."/>
            <person name="Manfio G.P."/>
            <person name="Maranhao A.Q."/>
            <person name="Martins W.S."/>
            <person name="di Mauro S.M.Z."/>
            <person name="de Medeiros S.R.B."/>
            <person name="Meissner R.V."/>
            <person name="Moreira M.A.M."/>
            <person name="Nascimento F.F."/>
            <person name="Nicolas M.F."/>
            <person name="Oliveira J.G."/>
            <person name="Oliveira S.C."/>
            <person name="Paixao R.F.C."/>
            <person name="Parente J.A."/>
            <person name="Pedrosa F.O."/>
            <person name="Pena S.D.J."/>
            <person name="Pereira J.O."/>
            <person name="Pereira M."/>
            <person name="Pinto L.S.R.C."/>
            <person name="Pinto L.S."/>
            <person name="Porto J.I.R."/>
            <person name="Potrich D.P."/>
            <person name="Ramalho-Neto C.E."/>
            <person name="Reis A.M.M."/>
            <person name="Rigo L.U."/>
            <person name="Rondinelli E."/>
            <person name="Santos E.B.P."/>
            <person name="Santos F.R."/>
            <person name="Schneider M.P.C."/>
            <person name="Seuanez H.N."/>
            <person name="Silva A.M.R."/>
            <person name="da Silva A.L.C."/>
            <person name="Silva D.W."/>
            <person name="Silva R."/>
            <person name="Simoes I.C."/>
            <person name="Simon D."/>
            <person name="Soares C.M.A."/>
            <person name="Soares R.B.A."/>
            <person name="Souza E.M."/>
            <person name="Souza K.R.L."/>
            <person name="Souza R.C."/>
            <person name="Steffens M.B.R."/>
            <person name="Steindel M."/>
            <person name="Teixeira S.R."/>
            <person name="Urmenyi T."/>
            <person name="Vettore A."/>
            <person name="Wassem R."/>
            <person name="Zaha A."/>
            <person name="Simpson A.J.G."/>
        </authorList>
    </citation>
    <scope>NUCLEOTIDE SEQUENCE [LARGE SCALE GENOMIC DNA]</scope>
    <source>
        <strain>ATCC 12472 / DSM 30191 / JCM 1249 / CCUG 213 / NBRC 12614 / NCIMB 9131 / NCTC 9757 / MK</strain>
    </source>
</reference>
<organism>
    <name type="scientific">Chromobacterium violaceum (strain ATCC 12472 / DSM 30191 / JCM 1249 / CCUG 213 / NBRC 12614 / NCIMB 9131 / NCTC 9757 / MK)</name>
    <dbReference type="NCBI Taxonomy" id="243365"/>
    <lineage>
        <taxon>Bacteria</taxon>
        <taxon>Pseudomonadati</taxon>
        <taxon>Pseudomonadota</taxon>
        <taxon>Betaproteobacteria</taxon>
        <taxon>Neisseriales</taxon>
        <taxon>Chromobacteriaceae</taxon>
        <taxon>Chromobacterium</taxon>
    </lineage>
</organism>
<comment type="cofactor">
    <cofactor evidence="1">
        <name>[4Fe-4S] cluster</name>
        <dbReference type="ChEBI" id="CHEBI:49883"/>
    </cofactor>
    <text evidence="1">Binds 1 [4Fe-4S] cluster. The cluster is coordinated with 3 cysteines and an exchangeable S-adenosyl-L-methionine.</text>
</comment>
<comment type="subcellular location">
    <subcellularLocation>
        <location evidence="4">Cytoplasm</location>
    </subcellularLocation>
</comment>
<comment type="similarity">
    <text evidence="4">Belongs to the radical SAM superfamily. RlmN family.</text>
</comment>
<keyword id="KW-0004">4Fe-4S</keyword>
<keyword id="KW-0963">Cytoplasm</keyword>
<keyword id="KW-1015">Disulfide bond</keyword>
<keyword id="KW-0408">Iron</keyword>
<keyword id="KW-0411">Iron-sulfur</keyword>
<keyword id="KW-0479">Metal-binding</keyword>
<keyword id="KW-0489">Methyltransferase</keyword>
<keyword id="KW-1185">Reference proteome</keyword>
<keyword id="KW-0949">S-adenosyl-L-methionine</keyword>
<keyword id="KW-0808">Transferase</keyword>